<keyword id="KW-0131">Cell cycle</keyword>
<keyword id="KW-0132">Cell division</keyword>
<keyword id="KW-0342">GTP-binding</keyword>
<keyword id="KW-0460">Magnesium</keyword>
<keyword id="KW-0479">Metal-binding</keyword>
<keyword id="KW-0547">Nucleotide-binding</keyword>
<keyword id="KW-1185">Reference proteome</keyword>
<keyword id="KW-0717">Septation</keyword>
<dbReference type="EMBL" id="CP000453">
    <property type="protein sequence ID" value="ABI58197.1"/>
    <property type="molecule type" value="Genomic_DNA"/>
</dbReference>
<dbReference type="RefSeq" id="WP_011630590.1">
    <property type="nucleotide sequence ID" value="NC_008340.1"/>
</dbReference>
<dbReference type="SMR" id="Q0A4P0"/>
<dbReference type="KEGG" id="aeh:Mlg_2857"/>
<dbReference type="eggNOG" id="COG0218">
    <property type="taxonomic scope" value="Bacteria"/>
</dbReference>
<dbReference type="HOGENOM" id="CLU_033732_1_0_6"/>
<dbReference type="OrthoDB" id="9804921at2"/>
<dbReference type="Proteomes" id="UP000001962">
    <property type="component" value="Chromosome"/>
</dbReference>
<dbReference type="GO" id="GO:0005829">
    <property type="term" value="C:cytosol"/>
    <property type="evidence" value="ECO:0007669"/>
    <property type="project" value="TreeGrafter"/>
</dbReference>
<dbReference type="GO" id="GO:0005525">
    <property type="term" value="F:GTP binding"/>
    <property type="evidence" value="ECO:0007669"/>
    <property type="project" value="UniProtKB-UniRule"/>
</dbReference>
<dbReference type="GO" id="GO:0046872">
    <property type="term" value="F:metal ion binding"/>
    <property type="evidence" value="ECO:0007669"/>
    <property type="project" value="UniProtKB-KW"/>
</dbReference>
<dbReference type="GO" id="GO:0000917">
    <property type="term" value="P:division septum assembly"/>
    <property type="evidence" value="ECO:0007669"/>
    <property type="project" value="UniProtKB-KW"/>
</dbReference>
<dbReference type="CDD" id="cd01876">
    <property type="entry name" value="YihA_EngB"/>
    <property type="match status" value="1"/>
</dbReference>
<dbReference type="FunFam" id="3.40.50.300:FF:000098">
    <property type="entry name" value="Probable GTP-binding protein EngB"/>
    <property type="match status" value="1"/>
</dbReference>
<dbReference type="Gene3D" id="3.40.50.300">
    <property type="entry name" value="P-loop containing nucleotide triphosphate hydrolases"/>
    <property type="match status" value="1"/>
</dbReference>
<dbReference type="HAMAP" id="MF_00321">
    <property type="entry name" value="GTPase_EngB"/>
    <property type="match status" value="1"/>
</dbReference>
<dbReference type="InterPro" id="IPR030393">
    <property type="entry name" value="G_ENGB_dom"/>
</dbReference>
<dbReference type="InterPro" id="IPR006073">
    <property type="entry name" value="GTP-bd"/>
</dbReference>
<dbReference type="InterPro" id="IPR019987">
    <property type="entry name" value="GTP-bd_ribosome_bio_YsxC"/>
</dbReference>
<dbReference type="InterPro" id="IPR027417">
    <property type="entry name" value="P-loop_NTPase"/>
</dbReference>
<dbReference type="NCBIfam" id="TIGR03598">
    <property type="entry name" value="GTPase_YsxC"/>
    <property type="match status" value="1"/>
</dbReference>
<dbReference type="PANTHER" id="PTHR11649:SF13">
    <property type="entry name" value="ENGB-TYPE G DOMAIN-CONTAINING PROTEIN"/>
    <property type="match status" value="1"/>
</dbReference>
<dbReference type="PANTHER" id="PTHR11649">
    <property type="entry name" value="MSS1/TRME-RELATED GTP-BINDING PROTEIN"/>
    <property type="match status" value="1"/>
</dbReference>
<dbReference type="Pfam" id="PF01926">
    <property type="entry name" value="MMR_HSR1"/>
    <property type="match status" value="1"/>
</dbReference>
<dbReference type="SUPFAM" id="SSF52540">
    <property type="entry name" value="P-loop containing nucleoside triphosphate hydrolases"/>
    <property type="match status" value="1"/>
</dbReference>
<dbReference type="PROSITE" id="PS51706">
    <property type="entry name" value="G_ENGB"/>
    <property type="match status" value="1"/>
</dbReference>
<sequence length="206" mass="22869">MNPIYFQARFLTSAPDLRRMPPDQGREVAFAGRSNVGKSSAINTLTNQKSLARTSKTPGRTQLINVFPITDEAALVDLPGYGYAKVPAAVRRRWDQVLPEYLAGRRALRGVVLVMDLRHPLTDFDRQMLDWCGHIGVPLHVLLTKADKFKAGAARNRGQNVGRQLRAEWPGVTWQIFSASKRMGVDEAHARLDEWLGLGPAAGEGR</sequence>
<proteinExistence type="inferred from homology"/>
<name>ENGB_ALKEH</name>
<evidence type="ECO:0000255" key="1">
    <source>
        <dbReference type="HAMAP-Rule" id="MF_00321"/>
    </source>
</evidence>
<organism>
    <name type="scientific">Alkalilimnicola ehrlichii (strain ATCC BAA-1101 / DSM 17681 / MLHE-1)</name>
    <dbReference type="NCBI Taxonomy" id="187272"/>
    <lineage>
        <taxon>Bacteria</taxon>
        <taxon>Pseudomonadati</taxon>
        <taxon>Pseudomonadota</taxon>
        <taxon>Gammaproteobacteria</taxon>
        <taxon>Chromatiales</taxon>
        <taxon>Ectothiorhodospiraceae</taxon>
        <taxon>Alkalilimnicola</taxon>
    </lineage>
</organism>
<feature type="chain" id="PRO_0000266806" description="Probable GTP-binding protein EngB">
    <location>
        <begin position="1"/>
        <end position="206"/>
    </location>
</feature>
<feature type="domain" description="EngB-type G" evidence="1">
    <location>
        <begin position="24"/>
        <end position="198"/>
    </location>
</feature>
<feature type="binding site" evidence="1">
    <location>
        <begin position="32"/>
        <end position="39"/>
    </location>
    <ligand>
        <name>GTP</name>
        <dbReference type="ChEBI" id="CHEBI:37565"/>
    </ligand>
</feature>
<feature type="binding site" evidence="1">
    <location>
        <position position="39"/>
    </location>
    <ligand>
        <name>Mg(2+)</name>
        <dbReference type="ChEBI" id="CHEBI:18420"/>
    </ligand>
</feature>
<feature type="binding site" evidence="1">
    <location>
        <begin position="59"/>
        <end position="63"/>
    </location>
    <ligand>
        <name>GTP</name>
        <dbReference type="ChEBI" id="CHEBI:37565"/>
    </ligand>
</feature>
<feature type="binding site" evidence="1">
    <location>
        <position position="61"/>
    </location>
    <ligand>
        <name>Mg(2+)</name>
        <dbReference type="ChEBI" id="CHEBI:18420"/>
    </ligand>
</feature>
<feature type="binding site" evidence="1">
    <location>
        <begin position="77"/>
        <end position="80"/>
    </location>
    <ligand>
        <name>GTP</name>
        <dbReference type="ChEBI" id="CHEBI:37565"/>
    </ligand>
</feature>
<feature type="binding site" evidence="1">
    <location>
        <begin position="144"/>
        <end position="147"/>
    </location>
    <ligand>
        <name>GTP</name>
        <dbReference type="ChEBI" id="CHEBI:37565"/>
    </ligand>
</feature>
<feature type="binding site" evidence="1">
    <location>
        <begin position="177"/>
        <end position="179"/>
    </location>
    <ligand>
        <name>GTP</name>
        <dbReference type="ChEBI" id="CHEBI:37565"/>
    </ligand>
</feature>
<accession>Q0A4P0</accession>
<reference key="1">
    <citation type="submission" date="2006-08" db="EMBL/GenBank/DDBJ databases">
        <title>Complete sequence of Alkalilimnicola ehrilichei MLHE-1.</title>
        <authorList>
            <person name="Copeland A."/>
            <person name="Lucas S."/>
            <person name="Lapidus A."/>
            <person name="Barry K."/>
            <person name="Detter J.C."/>
            <person name="Glavina del Rio T."/>
            <person name="Hammon N."/>
            <person name="Israni S."/>
            <person name="Dalin E."/>
            <person name="Tice H."/>
            <person name="Pitluck S."/>
            <person name="Sims D."/>
            <person name="Brettin T."/>
            <person name="Bruce D."/>
            <person name="Han C."/>
            <person name="Tapia R."/>
            <person name="Gilna P."/>
            <person name="Schmutz J."/>
            <person name="Larimer F."/>
            <person name="Land M."/>
            <person name="Hauser L."/>
            <person name="Kyrpides N."/>
            <person name="Mikhailova N."/>
            <person name="Oremland R.S."/>
            <person name="Hoeft S.E."/>
            <person name="Switzer-Blum J."/>
            <person name="Kulp T."/>
            <person name="King G."/>
            <person name="Tabita R."/>
            <person name="Witte B."/>
            <person name="Santini J.M."/>
            <person name="Basu P."/>
            <person name="Hollibaugh J.T."/>
            <person name="Xie G."/>
            <person name="Stolz J.F."/>
            <person name="Richardson P."/>
        </authorList>
    </citation>
    <scope>NUCLEOTIDE SEQUENCE [LARGE SCALE GENOMIC DNA]</scope>
    <source>
        <strain>ATCC BAA-1101 / DSM 17681 / MLHE-1</strain>
    </source>
</reference>
<comment type="function">
    <text evidence="1">Necessary for normal cell division and for the maintenance of normal septation.</text>
</comment>
<comment type="cofactor">
    <cofactor evidence="1">
        <name>Mg(2+)</name>
        <dbReference type="ChEBI" id="CHEBI:18420"/>
    </cofactor>
</comment>
<comment type="similarity">
    <text evidence="1">Belongs to the TRAFAC class TrmE-Era-EngA-EngB-Septin-like GTPase superfamily. EngB GTPase family.</text>
</comment>
<protein>
    <recommendedName>
        <fullName evidence="1">Probable GTP-binding protein EngB</fullName>
    </recommendedName>
</protein>
<gene>
    <name evidence="1" type="primary">engB</name>
    <name type="ordered locus">Mlg_2857</name>
</gene>